<dbReference type="EC" id="1.6.5.-" evidence="1"/>
<dbReference type="EC" id="1.7.1.17" evidence="1"/>
<dbReference type="EMBL" id="AM902716">
    <property type="protein sequence ID" value="CAP41000.1"/>
    <property type="molecule type" value="Genomic_DNA"/>
</dbReference>
<dbReference type="SMR" id="A9I4K2"/>
<dbReference type="STRING" id="94624.Bpet0668"/>
<dbReference type="KEGG" id="bpt:Bpet0668"/>
<dbReference type="eggNOG" id="COG1182">
    <property type="taxonomic scope" value="Bacteria"/>
</dbReference>
<dbReference type="Proteomes" id="UP000001225">
    <property type="component" value="Chromosome"/>
</dbReference>
<dbReference type="GO" id="GO:0009055">
    <property type="term" value="F:electron transfer activity"/>
    <property type="evidence" value="ECO:0007669"/>
    <property type="project" value="UniProtKB-UniRule"/>
</dbReference>
<dbReference type="GO" id="GO:0010181">
    <property type="term" value="F:FMN binding"/>
    <property type="evidence" value="ECO:0007669"/>
    <property type="project" value="UniProtKB-UniRule"/>
</dbReference>
<dbReference type="GO" id="GO:0016652">
    <property type="term" value="F:oxidoreductase activity, acting on NAD(P)H as acceptor"/>
    <property type="evidence" value="ECO:0007669"/>
    <property type="project" value="UniProtKB-UniRule"/>
</dbReference>
<dbReference type="GO" id="GO:0016655">
    <property type="term" value="F:oxidoreductase activity, acting on NAD(P)H, quinone or similar compound as acceptor"/>
    <property type="evidence" value="ECO:0007669"/>
    <property type="project" value="InterPro"/>
</dbReference>
<dbReference type="Gene3D" id="3.40.50.360">
    <property type="match status" value="1"/>
</dbReference>
<dbReference type="HAMAP" id="MF_01216">
    <property type="entry name" value="Azoreductase_type1"/>
    <property type="match status" value="1"/>
</dbReference>
<dbReference type="InterPro" id="IPR003680">
    <property type="entry name" value="Flavodoxin_fold"/>
</dbReference>
<dbReference type="InterPro" id="IPR029039">
    <property type="entry name" value="Flavoprotein-like_sf"/>
</dbReference>
<dbReference type="InterPro" id="IPR050104">
    <property type="entry name" value="FMN-dep_NADH:Q_OxRdtase_AzoR1"/>
</dbReference>
<dbReference type="InterPro" id="IPR023048">
    <property type="entry name" value="NADH:quinone_OxRdtase_FMN_depd"/>
</dbReference>
<dbReference type="PANTHER" id="PTHR43741">
    <property type="entry name" value="FMN-DEPENDENT NADH-AZOREDUCTASE 1"/>
    <property type="match status" value="1"/>
</dbReference>
<dbReference type="PANTHER" id="PTHR43741:SF2">
    <property type="entry name" value="FMN-DEPENDENT NADH:QUINONE OXIDOREDUCTASE"/>
    <property type="match status" value="1"/>
</dbReference>
<dbReference type="Pfam" id="PF02525">
    <property type="entry name" value="Flavodoxin_2"/>
    <property type="match status" value="1"/>
</dbReference>
<dbReference type="SUPFAM" id="SSF52218">
    <property type="entry name" value="Flavoproteins"/>
    <property type="match status" value="1"/>
</dbReference>
<evidence type="ECO:0000255" key="1">
    <source>
        <dbReference type="HAMAP-Rule" id="MF_01216"/>
    </source>
</evidence>
<proteinExistence type="inferred from homology"/>
<reference key="1">
    <citation type="journal article" date="2008" name="BMC Genomics">
        <title>The missing link: Bordetella petrii is endowed with both the metabolic versatility of environmental bacteria and virulence traits of pathogenic Bordetellae.</title>
        <authorList>
            <person name="Gross R."/>
            <person name="Guzman C.A."/>
            <person name="Sebaihia M."/>
            <person name="Martin dos Santos V.A.P."/>
            <person name="Pieper D.H."/>
            <person name="Koebnik R."/>
            <person name="Lechner M."/>
            <person name="Bartels D."/>
            <person name="Buhrmester J."/>
            <person name="Choudhuri J.V."/>
            <person name="Ebensen T."/>
            <person name="Gaigalat L."/>
            <person name="Herrmann S."/>
            <person name="Khachane A.N."/>
            <person name="Larisch C."/>
            <person name="Link S."/>
            <person name="Linke B."/>
            <person name="Meyer F."/>
            <person name="Mormann S."/>
            <person name="Nakunst D."/>
            <person name="Rueckert C."/>
            <person name="Schneiker-Bekel S."/>
            <person name="Schulze K."/>
            <person name="Voerholter F.-J."/>
            <person name="Yevsa T."/>
            <person name="Engle J.T."/>
            <person name="Goldman W.E."/>
            <person name="Puehler A."/>
            <person name="Goebel U.B."/>
            <person name="Goesmann A."/>
            <person name="Bloecker H."/>
            <person name="Kaiser O."/>
            <person name="Martinez-Arias R."/>
        </authorList>
    </citation>
    <scope>NUCLEOTIDE SEQUENCE [LARGE SCALE GENOMIC DNA]</scope>
    <source>
        <strain>ATCC BAA-461 / DSM 12804 / CCUG 43448</strain>
    </source>
</reference>
<sequence>MKTLVILSSILGDRSHSKQLADHLIQRLRQHEPDGSIRVRDLAADPVPYFDGATAGALFTPADQRTAEQAAIVARSDALVAELFDADRIVFAVPVYNFGLPAQLKSYIDQIARAGVTFRYTAQGVPEGLLKNKQVVVLSARGGKAEGTPADTLTPYLAQVLGFVGLVDPVFISAEGMAMGELAAQDGLALARQRIDALVAGAPQQVAA</sequence>
<organism>
    <name type="scientific">Bordetella petrii (strain ATCC BAA-461 / DSM 12804 / CCUG 43448)</name>
    <dbReference type="NCBI Taxonomy" id="340100"/>
    <lineage>
        <taxon>Bacteria</taxon>
        <taxon>Pseudomonadati</taxon>
        <taxon>Pseudomonadota</taxon>
        <taxon>Betaproteobacteria</taxon>
        <taxon>Burkholderiales</taxon>
        <taxon>Alcaligenaceae</taxon>
        <taxon>Bordetella</taxon>
    </lineage>
</organism>
<gene>
    <name evidence="1" type="primary">azoR</name>
    <name type="ordered locus">Bpet0668</name>
</gene>
<comment type="function">
    <text evidence="1">Quinone reductase that provides resistance to thiol-specific stress caused by electrophilic quinones.</text>
</comment>
<comment type="function">
    <text evidence="1">Also exhibits azoreductase activity. Catalyzes the reductive cleavage of the azo bond in aromatic azo compounds to the corresponding amines.</text>
</comment>
<comment type="catalytic activity">
    <reaction evidence="1">
        <text>2 a quinone + NADH + H(+) = 2 a 1,4-benzosemiquinone + NAD(+)</text>
        <dbReference type="Rhea" id="RHEA:65952"/>
        <dbReference type="ChEBI" id="CHEBI:15378"/>
        <dbReference type="ChEBI" id="CHEBI:57540"/>
        <dbReference type="ChEBI" id="CHEBI:57945"/>
        <dbReference type="ChEBI" id="CHEBI:132124"/>
        <dbReference type="ChEBI" id="CHEBI:134225"/>
    </reaction>
</comment>
<comment type="catalytic activity">
    <reaction evidence="1">
        <text>N,N-dimethyl-1,4-phenylenediamine + anthranilate + 2 NAD(+) = 2-(4-dimethylaminophenyl)diazenylbenzoate + 2 NADH + 2 H(+)</text>
        <dbReference type="Rhea" id="RHEA:55872"/>
        <dbReference type="ChEBI" id="CHEBI:15378"/>
        <dbReference type="ChEBI" id="CHEBI:15783"/>
        <dbReference type="ChEBI" id="CHEBI:16567"/>
        <dbReference type="ChEBI" id="CHEBI:57540"/>
        <dbReference type="ChEBI" id="CHEBI:57945"/>
        <dbReference type="ChEBI" id="CHEBI:71579"/>
        <dbReference type="EC" id="1.7.1.17"/>
    </reaction>
</comment>
<comment type="cofactor">
    <cofactor evidence="1">
        <name>FMN</name>
        <dbReference type="ChEBI" id="CHEBI:58210"/>
    </cofactor>
    <text evidence="1">Binds 1 FMN per subunit.</text>
</comment>
<comment type="subunit">
    <text evidence="1">Homodimer.</text>
</comment>
<comment type="similarity">
    <text evidence="1">Belongs to the azoreductase type 1 family.</text>
</comment>
<protein>
    <recommendedName>
        <fullName evidence="1">FMN-dependent NADH:quinone oxidoreductase</fullName>
        <ecNumber evidence="1">1.6.5.-</ecNumber>
    </recommendedName>
    <alternativeName>
        <fullName evidence="1">Azo-dye reductase</fullName>
    </alternativeName>
    <alternativeName>
        <fullName evidence="1">FMN-dependent NADH-azo compound oxidoreductase</fullName>
    </alternativeName>
    <alternativeName>
        <fullName evidence="1">FMN-dependent NADH-azoreductase</fullName>
        <ecNumber evidence="1">1.7.1.17</ecNumber>
    </alternativeName>
</protein>
<name>AZOR_BORPD</name>
<keyword id="KW-0285">Flavoprotein</keyword>
<keyword id="KW-0288">FMN</keyword>
<keyword id="KW-0520">NAD</keyword>
<keyword id="KW-0560">Oxidoreductase</keyword>
<accession>A9I4K2</accession>
<feature type="chain" id="PRO_1000138966" description="FMN-dependent NADH:quinone oxidoreductase">
    <location>
        <begin position="1"/>
        <end position="208"/>
    </location>
</feature>
<feature type="binding site" evidence="1">
    <location>
        <position position="9"/>
    </location>
    <ligand>
        <name>FMN</name>
        <dbReference type="ChEBI" id="CHEBI:58210"/>
    </ligand>
</feature>
<feature type="binding site" evidence="1">
    <location>
        <begin position="15"/>
        <end position="17"/>
    </location>
    <ligand>
        <name>FMN</name>
        <dbReference type="ChEBI" id="CHEBI:58210"/>
    </ligand>
</feature>